<comment type="function">
    <text>Non-structural protein which is dispensable for virus replication in cell culture.</text>
</comment>
<comment type="interaction">
    <interactant intactId="EBI-25492924">
        <id>Q80H93</id>
    </interactant>
    <interactant intactId="EBI-6253230">
        <id>Q96P20</id>
        <label>NLRP3</label>
    </interactant>
    <organismsDiffer>true</organismsDiffer>
    <experiments>7</experiments>
</comment>
<comment type="subcellular location">
    <subcellularLocation>
        <location evidence="2">Host cytoplasm</location>
    </subcellularLocation>
    <subcellularLocation>
        <location evidence="2">Host nucleus</location>
    </subcellularLocation>
</comment>
<proteinExistence type="evidence at protein level"/>
<keyword id="KW-1015">Disulfide bond</keyword>
<keyword id="KW-1035">Host cytoplasm</keyword>
<keyword id="KW-1048">Host nucleus</keyword>
<keyword id="KW-1185">Reference proteome</keyword>
<organism>
    <name type="scientific">Severe acute respiratory syndrome coronavirus</name>
    <name type="common">SARS-CoV</name>
    <dbReference type="NCBI Taxonomy" id="694009"/>
    <lineage>
        <taxon>Viruses</taxon>
        <taxon>Riboviria</taxon>
        <taxon>Orthornavirae</taxon>
        <taxon>Pisuviricota</taxon>
        <taxon>Pisoniviricetes</taxon>
        <taxon>Nidovirales</taxon>
        <taxon>Cornidovirineae</taxon>
        <taxon>Coronaviridae</taxon>
        <taxon>Orthocoronavirinae</taxon>
        <taxon>Betacoronavirus</taxon>
        <taxon>Sarbecovirus</taxon>
    </lineage>
</organism>
<evidence type="ECO:0000255" key="1">
    <source>
        <dbReference type="PROSITE-ProRule" id="PRU01309"/>
    </source>
</evidence>
<evidence type="ECO:0000269" key="2">
    <source>
    </source>
</evidence>
<organismHost>
    <name type="scientific">Homo sapiens</name>
    <name type="common">Human</name>
    <dbReference type="NCBI Taxonomy" id="9606"/>
</organismHost>
<organismHost>
    <name type="scientific">Paguma larvata</name>
    <name type="common">Masked palm civet</name>
    <dbReference type="NCBI Taxonomy" id="9675"/>
</organismHost>
<name>NS8B_SARS</name>
<gene>
    <name type="ORF">8b</name>
</gene>
<dbReference type="EMBL" id="AY278741">
    <property type="protein sequence ID" value="AAP13450.1"/>
    <property type="molecule type" value="Genomic_RNA"/>
</dbReference>
<dbReference type="EMBL" id="AY274119">
    <property type="protein sequence ID" value="AAP41046.1"/>
    <property type="molecule type" value="Genomic_RNA"/>
</dbReference>
<dbReference type="EMBL" id="AY282752">
    <property type="status" value="NOT_ANNOTATED_CDS"/>
    <property type="molecule type" value="Genomic_RNA"/>
</dbReference>
<dbReference type="EMBL" id="AY278554">
    <property type="status" value="NOT_ANNOTATED_CDS"/>
    <property type="molecule type" value="Genomic_RNA"/>
</dbReference>
<dbReference type="EMBL" id="AY278491">
    <property type="status" value="NOT_ANNOTATED_CDS"/>
    <property type="molecule type" value="Genomic_RNA"/>
</dbReference>
<dbReference type="EMBL" id="AY278487">
    <property type="status" value="NOT_ANNOTATED_CDS"/>
    <property type="molecule type" value="Genomic_RNA"/>
</dbReference>
<dbReference type="EMBL" id="AY278488">
    <property type="status" value="NOT_ANNOTATED_CDS"/>
    <property type="molecule type" value="Genomic_RNA"/>
</dbReference>
<dbReference type="EMBL" id="AY278489">
    <property type="protein sequence ID" value="AAP51236.1"/>
    <property type="status" value="ALT_SEQ"/>
    <property type="molecule type" value="Genomic_RNA"/>
</dbReference>
<dbReference type="EMBL" id="AY278490">
    <property type="status" value="NOT_ANNOTATED_CDS"/>
    <property type="molecule type" value="Genomic_RNA"/>
</dbReference>
<dbReference type="EMBL" id="AY279354">
    <property type="status" value="NOT_ANNOTATED_CDS"/>
    <property type="molecule type" value="Genomic_RNA"/>
</dbReference>
<dbReference type="EMBL" id="AY310120">
    <property type="protein sequence ID" value="AAP50494.1"/>
    <property type="molecule type" value="Genomic_RNA"/>
</dbReference>
<dbReference type="EMBL" id="AY291315">
    <property type="protein sequence ID" value="AAP33706.1"/>
    <property type="molecule type" value="Genomic_RNA"/>
</dbReference>
<dbReference type="EMBL" id="AY348314">
    <property type="protein sequence ID" value="AAP97889.1"/>
    <property type="molecule type" value="Genomic_RNA"/>
</dbReference>
<dbReference type="EMBL" id="AY338174">
    <property type="protein sequence ID" value="AAQ01604.1"/>
    <property type="molecule type" value="Genomic_RNA"/>
</dbReference>
<dbReference type="EMBL" id="AY338175">
    <property type="protein sequence ID" value="AAQ01616.1"/>
    <property type="molecule type" value="Genomic_RNA"/>
</dbReference>
<dbReference type="EMBL" id="AP006557">
    <property type="protein sequence ID" value="BAC81357.1"/>
    <property type="molecule type" value="Genomic_RNA"/>
</dbReference>
<dbReference type="EMBL" id="AP006558">
    <property type="protein sequence ID" value="BAC81371.1"/>
    <property type="molecule type" value="Genomic_RNA"/>
</dbReference>
<dbReference type="EMBL" id="AP006559">
    <property type="protein sequence ID" value="BAC81385.1"/>
    <property type="molecule type" value="Genomic_RNA"/>
</dbReference>
<dbReference type="EMBL" id="AP006560">
    <property type="protein sequence ID" value="BAC81399.1"/>
    <property type="molecule type" value="Genomic_RNA"/>
</dbReference>
<dbReference type="EMBL" id="AP006561">
    <property type="protein sequence ID" value="BAC81413.1"/>
    <property type="molecule type" value="Genomic_RNA"/>
</dbReference>
<dbReference type="EMBL" id="AY323977">
    <property type="protein sequence ID" value="AAP72983.1"/>
    <property type="molecule type" value="Genomic_RNA"/>
</dbReference>
<dbReference type="EMBL" id="AY427439">
    <property type="protein sequence ID" value="AAQ94069.1"/>
    <property type="molecule type" value="Genomic_RNA"/>
</dbReference>
<dbReference type="EMBL" id="AH012999">
    <property type="protein sequence ID" value="AAP82973.1"/>
    <property type="molecule type" value="Genomic_RNA"/>
</dbReference>
<dbReference type="BioGRID" id="4383923">
    <property type="interactions" value="60"/>
</dbReference>
<dbReference type="IntAct" id="Q80H93">
    <property type="interactions" value="51"/>
</dbReference>
<dbReference type="MINT" id="Q80H93"/>
<dbReference type="Reactome" id="R-HSA-9679504">
    <property type="pathway name" value="Translation of Replicase and Assembly of the Replication Transcription Complex"/>
</dbReference>
<dbReference type="Reactome" id="R-HSA-9692916">
    <property type="pathway name" value="SARS-CoV-1 activates/modulates innate immune responses"/>
</dbReference>
<dbReference type="SIGNOR" id="Q80H93"/>
<dbReference type="Proteomes" id="UP000000354">
    <property type="component" value="Segment"/>
</dbReference>
<dbReference type="Proteomes" id="UP000103670">
    <property type="component" value="Segment"/>
</dbReference>
<dbReference type="Proteomes" id="UP000109640">
    <property type="component" value="Segment"/>
</dbReference>
<dbReference type="Proteomes" id="UP000116947">
    <property type="component" value="Segment"/>
</dbReference>
<dbReference type="Proteomes" id="UP000121636">
    <property type="component" value="Segment"/>
</dbReference>
<dbReference type="Proteomes" id="UP000131569">
    <property type="component" value="Segment"/>
</dbReference>
<dbReference type="Proteomes" id="UP000131955">
    <property type="component" value="Segment"/>
</dbReference>
<dbReference type="Proteomes" id="UP000137377">
    <property type="component" value="Genome"/>
</dbReference>
<dbReference type="Proteomes" id="UP000138690">
    <property type="component" value="Segment"/>
</dbReference>
<dbReference type="Proteomes" id="UP000143093">
    <property type="component" value="Segment"/>
</dbReference>
<dbReference type="Proteomes" id="UP000146108">
    <property type="component" value="Segment"/>
</dbReference>
<dbReference type="Proteomes" id="UP000146181">
    <property type="component" value="Segment"/>
</dbReference>
<dbReference type="Proteomes" id="UP000146296">
    <property type="component" value="Segment"/>
</dbReference>
<dbReference type="Proteomes" id="UP000148194">
    <property type="component" value="Segment"/>
</dbReference>
<dbReference type="Proteomes" id="UP000153467">
    <property type="component" value="Segment"/>
</dbReference>
<dbReference type="Proteomes" id="UP000160648">
    <property type="component" value="Segment"/>
</dbReference>
<dbReference type="Proteomes" id="UP000172416">
    <property type="component" value="Segment"/>
</dbReference>
<dbReference type="Proteomes" id="UP000180358">
    <property type="component" value="Segment"/>
</dbReference>
<dbReference type="GO" id="GO:0030430">
    <property type="term" value="C:host cell cytoplasm"/>
    <property type="evidence" value="ECO:0007669"/>
    <property type="project" value="UniProtKB-SubCell"/>
</dbReference>
<dbReference type="GO" id="GO:0042025">
    <property type="term" value="C:host cell nucleus"/>
    <property type="evidence" value="ECO:0007669"/>
    <property type="project" value="UniProtKB-SubCell"/>
</dbReference>
<dbReference type="InterPro" id="IPR022722">
    <property type="entry name" value="ORF8_betacoronavirus"/>
</dbReference>
<dbReference type="InterPro" id="IPR046444">
    <property type="entry name" value="SARS_ORF8_IG"/>
</dbReference>
<dbReference type="Pfam" id="PF12093">
    <property type="entry name" value="bCoV_NS8"/>
    <property type="match status" value="1"/>
</dbReference>
<dbReference type="PROSITE" id="PS51964">
    <property type="entry name" value="SARS_ORF8_IG"/>
    <property type="match status" value="1"/>
</dbReference>
<reference key="1">
    <citation type="journal article" date="2003" name="Science">
        <title>Characterization of a novel coronavirus associated with severe acute respiratory syndrome.</title>
        <authorList>
            <person name="Rota P.A."/>
            <person name="Oberste M.S."/>
            <person name="Monroe S.S."/>
            <person name="Nix W.A."/>
            <person name="Campagnoli R."/>
            <person name="Icenogle J.P."/>
            <person name="Penaranda S."/>
            <person name="Bankamp B."/>
            <person name="Maher K."/>
            <person name="Chen M.-H."/>
            <person name="Tong S."/>
            <person name="Tamin A."/>
            <person name="Lowe L."/>
            <person name="Frace M."/>
            <person name="DeRisi J.L."/>
            <person name="Chen Q."/>
            <person name="Wang D."/>
            <person name="Erdman D.D."/>
            <person name="Peret T.C.T."/>
            <person name="Burns C."/>
            <person name="Ksiazek T.G."/>
            <person name="Rollin P.E."/>
            <person name="Sanchez A."/>
            <person name="Liffick S."/>
            <person name="Holloway B."/>
            <person name="Limor J."/>
            <person name="McCaustland K."/>
            <person name="Olsen-Rasmussen M."/>
            <person name="Fouchier R."/>
            <person name="Guenther S."/>
            <person name="Osterhaus A.D.M.E."/>
            <person name="Drosten C."/>
            <person name="Pallansch M.A."/>
            <person name="Anderson L.J."/>
            <person name="Bellini W.J."/>
        </authorList>
    </citation>
    <scope>NUCLEOTIDE SEQUENCE [GENOMIC RNA]</scope>
    <source>
        <strain>Isolate Urbani</strain>
    </source>
</reference>
<reference key="2">
    <citation type="journal article" date="2003" name="Science">
        <title>The genome sequence of the SARS-associated coronavirus.</title>
        <authorList>
            <person name="Marra M.A."/>
            <person name="Jones S.J.M."/>
            <person name="Astell C.R."/>
            <person name="Holt R.A."/>
            <person name="Brooks-Wilson A."/>
            <person name="Butterfield Y.S.N."/>
            <person name="Khattra J."/>
            <person name="Asano J.K."/>
            <person name="Barber S.A."/>
            <person name="Chan S.Y."/>
            <person name="Cloutier A."/>
            <person name="Coughlin S.M."/>
            <person name="Freeman D."/>
            <person name="Girn N."/>
            <person name="Griffith O.L."/>
            <person name="Leach S.R."/>
            <person name="Mayo M."/>
            <person name="McDonald H."/>
            <person name="Montgomery S.B."/>
            <person name="Pandoh P.K."/>
            <person name="Petrescu A.S."/>
            <person name="Robertson A.G."/>
            <person name="Schein J.E."/>
            <person name="Siddiqui A."/>
            <person name="Smailus D.E."/>
            <person name="Stott J.M."/>
            <person name="Yang G.S."/>
            <person name="Plummer F."/>
            <person name="Andonov A."/>
            <person name="Artsob H."/>
            <person name="Bastien N."/>
            <person name="Bernard K."/>
            <person name="Booth T.F."/>
            <person name="Bowness D."/>
            <person name="Czub M."/>
            <person name="Drebot M."/>
            <person name="Fernando L."/>
            <person name="Flick R."/>
            <person name="Garbutt M."/>
            <person name="Gray M."/>
            <person name="Grolla A."/>
            <person name="Jones S."/>
            <person name="Feldmann H."/>
            <person name="Meyers A."/>
            <person name="Kabani A."/>
            <person name="Li Y."/>
            <person name="Normand S."/>
            <person name="Stroher U."/>
            <person name="Tipples G.A."/>
            <person name="Tyler S."/>
            <person name="Vogrig R."/>
            <person name="Ward D."/>
            <person name="Watson B."/>
            <person name="Brunham R.C."/>
            <person name="Krajden M."/>
            <person name="Petric M."/>
            <person name="Skowronski D.M."/>
            <person name="Upton C."/>
            <person name="Roper R.L."/>
        </authorList>
    </citation>
    <scope>NUCLEOTIDE SEQUENCE [GENOMIC RNA]</scope>
    <source>
        <strain>Isolate Tor2</strain>
    </source>
</reference>
<reference key="3">
    <citation type="journal article" date="2003" name="N. Engl. J. Med.">
        <title>Coronavirus genomic-sequence variations and the epidemiology of the severe acute respiratory syndrome.</title>
        <authorList>
            <person name="Tsui S.K.W."/>
            <person name="Chim S.S.C."/>
            <person name="Lo Y.M.D."/>
        </authorList>
    </citation>
    <scope>NUCLEOTIDE SEQUENCE [GENOMIC RNA]</scope>
    <source>
        <strain>Isolate CUHK-Su10</strain>
        <strain>Isolate CUHK-W1</strain>
    </source>
</reference>
<reference key="4">
    <citation type="journal article" date="2003" name="Exp. Biol. Med.">
        <title>The complete genome sequence of severe acute respiratory syndrome coronavirus strain HKU-39849 (HK-39).</title>
        <authorList>
            <person name="Zeng F.Y."/>
            <person name="Chan C.W."/>
            <person name="Chan M.N."/>
            <person name="Chen J.D."/>
            <person name="Chow K.Y.C."/>
            <person name="Hon C.C.C."/>
            <person name="Hui R.K.H."/>
            <person name="Li J."/>
            <person name="Li V.Y.Y."/>
            <person name="Wang C.Y."/>
            <person name="Wang P.Y."/>
            <person name="Guan Y."/>
            <person name="Zheng B."/>
            <person name="Poon L.L.M."/>
            <person name="Chan K.H."/>
            <person name="Yuen K.Y."/>
            <person name="Peiris J.S.M."/>
            <person name="Leung F.C."/>
        </authorList>
    </citation>
    <scope>NUCLEOTIDE SEQUENCE [GENOMIC RNA]</scope>
    <source>
        <strain>Isolate HKU-39849</strain>
    </source>
</reference>
<reference key="5">
    <citation type="submission" date="2003-04" db="EMBL/GenBank/DDBJ databases">
        <authorList>
            <person name="Qin E."/>
            <person name="Zhu Q."/>
            <person name="Yu M."/>
            <person name="Fan B."/>
            <person name="Chang G."/>
            <person name="Si B."/>
            <person name="Yang B."/>
            <person name="Peng W."/>
            <person name="Jiang T."/>
            <person name="Liu B."/>
            <person name="Deng Y."/>
            <person name="Liu H."/>
            <person name="Zhang Y."/>
            <person name="Wang C."/>
            <person name="Li Y."/>
            <person name="Gan Y."/>
            <person name="Li X."/>
            <person name="Lu F."/>
            <person name="Tan G."/>
            <person name="Yang R."/>
            <person name="Cao W.S."/>
            <person name="Wang J."/>
            <person name="Chen W."/>
            <person name="Cong L."/>
            <person name="Deng Y."/>
            <person name="Dong W."/>
            <person name="Han Y."/>
            <person name="Hu W."/>
            <person name="Lei M."/>
            <person name="Li C."/>
            <person name="Li G."/>
            <person name="Li G."/>
            <person name="Li H."/>
            <person name="Li S."/>
            <person name="Li S."/>
            <person name="Li W."/>
            <person name="Li W."/>
            <person name="Lin W."/>
            <person name="Liu J."/>
            <person name="Liu Z."/>
            <person name="Lu H."/>
            <person name="Ni P."/>
            <person name="Qi Q."/>
            <person name="Sun Y."/>
            <person name="Tang L."/>
            <person name="Tong Z."/>
            <person name="Wang J."/>
            <person name="Wang X."/>
            <person name="Wu Q."/>
            <person name="Xi Y."/>
            <person name="Xu Z."/>
            <person name="Yang L."/>
            <person name="Ye C."/>
            <person name="Ye J."/>
            <person name="Zhang B."/>
            <person name="Zhang F."/>
            <person name="Zhang J."/>
            <person name="Zhang X."/>
            <person name="Zhou J."/>
            <person name="Yang H."/>
        </authorList>
    </citation>
    <scope>NUCLEOTIDE SEQUENCE [GENOMIC RNA]</scope>
    <source>
        <strain>Isolate BJ01</strain>
        <strain>Isolate BJ02</strain>
        <strain>Isolate BJ03</strain>
        <strain>Isolate BJ04</strain>
        <strain>Isolate GD01</strain>
    </source>
</reference>
<reference key="6">
    <citation type="submission" date="2003-05" db="EMBL/GenBank/DDBJ databases">
        <title>The complete genome of SARS coronavirus clone TW1.</title>
        <authorList>
            <person name="Yeh S.-H."/>
            <person name="Kao C.-L."/>
            <person name="Tsai C.-Y."/>
            <person name="Liu C.-J."/>
            <person name="Chen D.-S."/>
            <person name="Chen P.-J."/>
        </authorList>
    </citation>
    <scope>NUCLEOTIDE SEQUENCE [GENOMIC RNA]</scope>
    <source>
        <strain>Isolate TW1</strain>
    </source>
</reference>
<reference key="7">
    <citation type="submission" date="2003-05" db="EMBL/GenBank/DDBJ databases">
        <title>SARS virus is a close relative of type II coronaviruses.</title>
        <authorList>
            <person name="Eickmann M."/>
            <person name="Becker S."/>
            <person name="Klenk H.-D."/>
            <person name="Doerr H.W."/>
            <person name="Stadler K."/>
            <person name="Censini S."/>
            <person name="Guidotti S."/>
            <person name="Masignani V."/>
            <person name="Scarselli M."/>
            <person name="Mora M."/>
            <person name="Donati C."/>
            <person name="Han J."/>
            <person name="Song H.C."/>
            <person name="Abrignani S."/>
            <person name="Covacci A."/>
            <person name="Rappuoli R."/>
        </authorList>
    </citation>
    <scope>NUCLEOTIDE SEQUENCE [GENOMIC RNA]</scope>
    <source>
        <strain>Isolate FRA</strain>
    </source>
</reference>
<reference key="8">
    <citation type="submission" date="2003-05" db="EMBL/GenBank/DDBJ databases">
        <authorList>
            <person name="Thiel V."/>
            <person name="Hertzig T."/>
            <person name="Putics A."/>
            <person name="Ivanov K.A."/>
            <person name="Schelle B."/>
            <person name="Bayer S."/>
            <person name="Scheiner B."/>
            <person name="Weinand H."/>
            <person name="Weissbrich B."/>
            <person name="Ziebuhr J."/>
        </authorList>
    </citation>
    <scope>NUCLEOTIDE SEQUENCE [GENOMIC RNA]</scope>
    <source>
        <strain>Isolate Frankfurt 1</strain>
    </source>
</reference>
<reference key="9">
    <citation type="submission" date="2003-07" db="EMBL/GenBank/DDBJ databases">
        <authorList>
            <person name="Chang J.-G.C."/>
            <person name="Lin T.-H."/>
            <person name="Chen C.-M."/>
            <person name="Lin C.-S."/>
            <person name="Chan W.-L."/>
            <person name="Shih M.-C."/>
        </authorList>
    </citation>
    <scope>NUCLEOTIDE SEQUENCE [GENOMIC RNA]</scope>
    <source>
        <strain>Isolate Taiwan TC1</strain>
        <strain>Isolate Taiwan TC2</strain>
        <strain>Isolate Taiwan TC3</strain>
    </source>
</reference>
<reference key="10">
    <citation type="submission" date="2003-07" db="EMBL/GenBank/DDBJ databases">
        <title>The complete genome of SARS coronavirus TWH.</title>
        <authorList>
            <person name="Shu H.Y."/>
            <person name="Wu K.M."/>
            <person name="Tsai S.F."/>
        </authorList>
    </citation>
    <scope>NUCLEOTIDE SEQUENCE [GENOMIC RNA]</scope>
    <source>
        <strain>Isolate TWH</strain>
        <strain>Isolate TWJ</strain>
        <strain>Isolate TWK</strain>
        <strain>Isolate TWS</strain>
        <strain>Isolate TWY</strain>
    </source>
</reference>
<reference key="11">
    <citation type="submission" date="2003-07" db="EMBL/GenBank/DDBJ databases">
        <authorList>
            <person name="Canducci F."/>
            <person name="Clementi M."/>
            <person name="Poli G."/>
            <person name="Vicenzi E."/>
        </authorList>
    </citation>
    <scope>NUCLEOTIDE SEQUENCE [GENOMIC RNA]</scope>
    <source>
        <strain>Isolate HSR 1</strain>
    </source>
</reference>
<reference key="12">
    <citation type="submission" date="2003-10" db="EMBL/GenBank/DDBJ databases">
        <authorList>
            <person name="Balotta C."/>
            <person name="Corvasce S."/>
            <person name="Violin M."/>
            <person name="Galli M."/>
            <person name="Moroni M."/>
            <person name="Vigevani G.M."/>
            <person name="Ruan Y.J."/>
            <person name="Salemi M."/>
        </authorList>
    </citation>
    <scope>NUCLEOTIDE SEQUENCE [GENOMIC RNA]</scope>
    <source>
        <strain>Isolate AS</strain>
    </source>
</reference>
<reference key="13">
    <citation type="submission" date="2003-06" db="EMBL/GenBank/DDBJ databases">
        <authorList>
            <person name="Yuan Z."/>
            <person name="Zhang X."/>
            <person name="Hu Y."/>
            <person name="Lan S."/>
            <person name="Wang H."/>
            <person name="Zhou Z."/>
            <person name="Wen Y."/>
        </authorList>
    </citation>
    <scope>NUCLEOTIDE SEQUENCE [GENOMIC RNA]</scope>
    <source>
        <strain>Isolate Shanghai LY</strain>
    </source>
</reference>
<reference key="14">
    <citation type="journal article" date="2006" name="FEBS Lett.">
        <title>Expression and functional characterization of the putative protein 8b of the severe acute respiratory syndrome-associated coronavirus.</title>
        <authorList>
            <person name="Law P.Y.P."/>
            <person name="Liu Y.-M."/>
            <person name="Geng H."/>
            <person name="Kwan K.H."/>
            <person name="Waye M.M.-Y."/>
            <person name="Ho Y.-Y."/>
        </authorList>
    </citation>
    <scope>SUBCELLULAR LOCATION</scope>
    <source>
        <strain>Isolate CUHK-Su10</strain>
    </source>
</reference>
<sequence length="84" mass="9560">MCLKILVRYNTRGNTYSTAWLCALGKVLPFHRWHTMVQTCTPNVTINCQDPAGGALIARCWYLHEGHQTAAFRDVLVVLNKRTN</sequence>
<feature type="chain" id="PRO_0000106135" description="ORF8b protein">
    <location>
        <begin position="1"/>
        <end position="84"/>
    </location>
</feature>
<feature type="domain" description="SARS ORF8 Ig-like" evidence="1">
    <location>
        <begin position="1"/>
        <end position="82"/>
    </location>
</feature>
<feature type="disulfide bond" evidence="1">
    <location>
        <begin position="22"/>
        <end position="40"/>
    </location>
</feature>
<feature type="sequence variant" description="In strain: Isolate GD01.">
    <original>L</original>
    <variation>F</variation>
    <location>
        <position position="76"/>
    </location>
</feature>
<accession>Q80H93</accession>
<accession>Q7TFA6</accession>
<protein>
    <recommendedName>
        <fullName>ORF8b protein</fullName>
    </recommendedName>
    <alternativeName>
        <fullName>Accessory protein 8b</fullName>
    </alternativeName>
    <alternativeName>
        <fullName>Non-structural protein 8b</fullName>
        <shortName>ns8b</shortName>
    </alternativeName>
</protein>